<gene>
    <name evidence="1" type="primary">ispH</name>
    <name type="ordered locus">Gbem_3256</name>
</gene>
<feature type="chain" id="PRO_1000098951" description="4-hydroxy-3-methylbut-2-enyl diphosphate reductase">
    <location>
        <begin position="1"/>
        <end position="283"/>
    </location>
</feature>
<feature type="active site" description="Proton donor" evidence="1">
    <location>
        <position position="125"/>
    </location>
</feature>
<feature type="binding site" evidence="1">
    <location>
        <position position="12"/>
    </location>
    <ligand>
        <name>[4Fe-4S] cluster</name>
        <dbReference type="ChEBI" id="CHEBI:49883"/>
    </ligand>
</feature>
<feature type="binding site" evidence="1">
    <location>
        <position position="40"/>
    </location>
    <ligand>
        <name>(2E)-4-hydroxy-3-methylbut-2-enyl diphosphate</name>
        <dbReference type="ChEBI" id="CHEBI:128753"/>
    </ligand>
</feature>
<feature type="binding site" evidence="1">
    <location>
        <position position="40"/>
    </location>
    <ligand>
        <name>dimethylallyl diphosphate</name>
        <dbReference type="ChEBI" id="CHEBI:57623"/>
    </ligand>
</feature>
<feature type="binding site" evidence="1">
    <location>
        <position position="40"/>
    </location>
    <ligand>
        <name>isopentenyl diphosphate</name>
        <dbReference type="ChEBI" id="CHEBI:128769"/>
    </ligand>
</feature>
<feature type="binding site" evidence="1">
    <location>
        <position position="73"/>
    </location>
    <ligand>
        <name>(2E)-4-hydroxy-3-methylbut-2-enyl diphosphate</name>
        <dbReference type="ChEBI" id="CHEBI:128753"/>
    </ligand>
</feature>
<feature type="binding site" evidence="1">
    <location>
        <position position="73"/>
    </location>
    <ligand>
        <name>dimethylallyl diphosphate</name>
        <dbReference type="ChEBI" id="CHEBI:57623"/>
    </ligand>
</feature>
<feature type="binding site" evidence="1">
    <location>
        <position position="73"/>
    </location>
    <ligand>
        <name>isopentenyl diphosphate</name>
        <dbReference type="ChEBI" id="CHEBI:128769"/>
    </ligand>
</feature>
<feature type="binding site" evidence="1">
    <location>
        <position position="95"/>
    </location>
    <ligand>
        <name>[4Fe-4S] cluster</name>
        <dbReference type="ChEBI" id="CHEBI:49883"/>
    </ligand>
</feature>
<feature type="binding site" evidence="1">
    <location>
        <position position="123"/>
    </location>
    <ligand>
        <name>(2E)-4-hydroxy-3-methylbut-2-enyl diphosphate</name>
        <dbReference type="ChEBI" id="CHEBI:128753"/>
    </ligand>
</feature>
<feature type="binding site" evidence="1">
    <location>
        <position position="123"/>
    </location>
    <ligand>
        <name>dimethylallyl diphosphate</name>
        <dbReference type="ChEBI" id="CHEBI:57623"/>
    </ligand>
</feature>
<feature type="binding site" evidence="1">
    <location>
        <position position="123"/>
    </location>
    <ligand>
        <name>isopentenyl diphosphate</name>
        <dbReference type="ChEBI" id="CHEBI:128769"/>
    </ligand>
</feature>
<feature type="binding site" evidence="1">
    <location>
        <position position="161"/>
    </location>
    <ligand>
        <name>(2E)-4-hydroxy-3-methylbut-2-enyl diphosphate</name>
        <dbReference type="ChEBI" id="CHEBI:128753"/>
    </ligand>
</feature>
<feature type="binding site" evidence="1">
    <location>
        <position position="189"/>
    </location>
    <ligand>
        <name>[4Fe-4S] cluster</name>
        <dbReference type="ChEBI" id="CHEBI:49883"/>
    </ligand>
</feature>
<feature type="binding site" evidence="1">
    <location>
        <position position="217"/>
    </location>
    <ligand>
        <name>(2E)-4-hydroxy-3-methylbut-2-enyl diphosphate</name>
        <dbReference type="ChEBI" id="CHEBI:128753"/>
    </ligand>
</feature>
<feature type="binding site" evidence="1">
    <location>
        <position position="217"/>
    </location>
    <ligand>
        <name>dimethylallyl diphosphate</name>
        <dbReference type="ChEBI" id="CHEBI:57623"/>
    </ligand>
</feature>
<feature type="binding site" evidence="1">
    <location>
        <position position="217"/>
    </location>
    <ligand>
        <name>isopentenyl diphosphate</name>
        <dbReference type="ChEBI" id="CHEBI:128769"/>
    </ligand>
</feature>
<feature type="binding site" evidence="1">
    <location>
        <position position="219"/>
    </location>
    <ligand>
        <name>(2E)-4-hydroxy-3-methylbut-2-enyl diphosphate</name>
        <dbReference type="ChEBI" id="CHEBI:128753"/>
    </ligand>
</feature>
<feature type="binding site" evidence="1">
    <location>
        <position position="219"/>
    </location>
    <ligand>
        <name>dimethylallyl diphosphate</name>
        <dbReference type="ChEBI" id="CHEBI:57623"/>
    </ligand>
</feature>
<feature type="binding site" evidence="1">
    <location>
        <position position="219"/>
    </location>
    <ligand>
        <name>isopentenyl diphosphate</name>
        <dbReference type="ChEBI" id="CHEBI:128769"/>
    </ligand>
</feature>
<feature type="binding site" evidence="1">
    <location>
        <position position="261"/>
    </location>
    <ligand>
        <name>(2E)-4-hydroxy-3-methylbut-2-enyl diphosphate</name>
        <dbReference type="ChEBI" id="CHEBI:128753"/>
    </ligand>
</feature>
<feature type="binding site" evidence="1">
    <location>
        <position position="261"/>
    </location>
    <ligand>
        <name>dimethylallyl diphosphate</name>
        <dbReference type="ChEBI" id="CHEBI:57623"/>
    </ligand>
</feature>
<feature type="binding site" evidence="1">
    <location>
        <position position="261"/>
    </location>
    <ligand>
        <name>isopentenyl diphosphate</name>
        <dbReference type="ChEBI" id="CHEBI:128769"/>
    </ligand>
</feature>
<name>ISPH_CITBB</name>
<protein>
    <recommendedName>
        <fullName evidence="1">4-hydroxy-3-methylbut-2-enyl diphosphate reductase</fullName>
        <shortName evidence="1">HMBPP reductase</shortName>
        <ecNumber evidence="1">1.17.7.4</ecNumber>
    </recommendedName>
</protein>
<dbReference type="EC" id="1.17.7.4" evidence="1"/>
<dbReference type="EMBL" id="CP001124">
    <property type="protein sequence ID" value="ACH40253.1"/>
    <property type="molecule type" value="Genomic_DNA"/>
</dbReference>
<dbReference type="RefSeq" id="WP_012531684.1">
    <property type="nucleotide sequence ID" value="NC_011146.1"/>
</dbReference>
<dbReference type="SMR" id="B5E9S9"/>
<dbReference type="STRING" id="404380.Gbem_3256"/>
<dbReference type="KEGG" id="gbm:Gbem_3256"/>
<dbReference type="eggNOG" id="COG0761">
    <property type="taxonomic scope" value="Bacteria"/>
</dbReference>
<dbReference type="HOGENOM" id="CLU_027486_0_1_7"/>
<dbReference type="OrthoDB" id="9804068at2"/>
<dbReference type="UniPathway" id="UPA00056">
    <property type="reaction ID" value="UER00097"/>
</dbReference>
<dbReference type="UniPathway" id="UPA00059">
    <property type="reaction ID" value="UER00105"/>
</dbReference>
<dbReference type="Proteomes" id="UP000008825">
    <property type="component" value="Chromosome"/>
</dbReference>
<dbReference type="GO" id="GO:0051539">
    <property type="term" value="F:4 iron, 4 sulfur cluster binding"/>
    <property type="evidence" value="ECO:0007669"/>
    <property type="project" value="UniProtKB-UniRule"/>
</dbReference>
<dbReference type="GO" id="GO:0051745">
    <property type="term" value="F:4-hydroxy-3-methylbut-2-enyl diphosphate reductase activity"/>
    <property type="evidence" value="ECO:0007669"/>
    <property type="project" value="UniProtKB-UniRule"/>
</dbReference>
<dbReference type="GO" id="GO:0046872">
    <property type="term" value="F:metal ion binding"/>
    <property type="evidence" value="ECO:0007669"/>
    <property type="project" value="UniProtKB-KW"/>
</dbReference>
<dbReference type="GO" id="GO:0050992">
    <property type="term" value="P:dimethylallyl diphosphate biosynthetic process"/>
    <property type="evidence" value="ECO:0007669"/>
    <property type="project" value="UniProtKB-UniRule"/>
</dbReference>
<dbReference type="GO" id="GO:0019288">
    <property type="term" value="P:isopentenyl diphosphate biosynthetic process, methylerythritol 4-phosphate pathway"/>
    <property type="evidence" value="ECO:0007669"/>
    <property type="project" value="UniProtKB-UniRule"/>
</dbReference>
<dbReference type="GO" id="GO:0016114">
    <property type="term" value="P:terpenoid biosynthetic process"/>
    <property type="evidence" value="ECO:0007669"/>
    <property type="project" value="UniProtKB-UniRule"/>
</dbReference>
<dbReference type="CDD" id="cd13944">
    <property type="entry name" value="lytB_ispH"/>
    <property type="match status" value="1"/>
</dbReference>
<dbReference type="Gene3D" id="3.40.50.11270">
    <property type="match status" value="1"/>
</dbReference>
<dbReference type="Gene3D" id="3.40.1010.20">
    <property type="entry name" value="4-hydroxy-3-methylbut-2-enyl diphosphate reductase, catalytic domain"/>
    <property type="match status" value="2"/>
</dbReference>
<dbReference type="HAMAP" id="MF_00191">
    <property type="entry name" value="IspH"/>
    <property type="match status" value="1"/>
</dbReference>
<dbReference type="InterPro" id="IPR003451">
    <property type="entry name" value="LytB/IspH"/>
</dbReference>
<dbReference type="NCBIfam" id="TIGR00216">
    <property type="entry name" value="ispH_lytB"/>
    <property type="match status" value="1"/>
</dbReference>
<dbReference type="NCBIfam" id="NF002187">
    <property type="entry name" value="PRK01045.1-1"/>
    <property type="match status" value="1"/>
</dbReference>
<dbReference type="PANTHER" id="PTHR30426">
    <property type="entry name" value="4-HYDROXY-3-METHYLBUT-2-ENYL DIPHOSPHATE REDUCTASE"/>
    <property type="match status" value="1"/>
</dbReference>
<dbReference type="PANTHER" id="PTHR30426:SF0">
    <property type="entry name" value="4-HYDROXY-3-METHYLBUT-2-ENYL DIPHOSPHATE REDUCTASE"/>
    <property type="match status" value="1"/>
</dbReference>
<dbReference type="Pfam" id="PF02401">
    <property type="entry name" value="LYTB"/>
    <property type="match status" value="1"/>
</dbReference>
<comment type="function">
    <text evidence="1">Catalyzes the conversion of 1-hydroxy-2-methyl-2-(E)-butenyl 4-diphosphate (HMBPP) into a mixture of isopentenyl diphosphate (IPP) and dimethylallyl diphosphate (DMAPP). Acts in the terminal step of the DOXP/MEP pathway for isoprenoid precursor biosynthesis.</text>
</comment>
<comment type="catalytic activity">
    <reaction evidence="1">
        <text>isopentenyl diphosphate + 2 oxidized [2Fe-2S]-[ferredoxin] + H2O = (2E)-4-hydroxy-3-methylbut-2-enyl diphosphate + 2 reduced [2Fe-2S]-[ferredoxin] + 2 H(+)</text>
        <dbReference type="Rhea" id="RHEA:24488"/>
        <dbReference type="Rhea" id="RHEA-COMP:10000"/>
        <dbReference type="Rhea" id="RHEA-COMP:10001"/>
        <dbReference type="ChEBI" id="CHEBI:15377"/>
        <dbReference type="ChEBI" id="CHEBI:15378"/>
        <dbReference type="ChEBI" id="CHEBI:33737"/>
        <dbReference type="ChEBI" id="CHEBI:33738"/>
        <dbReference type="ChEBI" id="CHEBI:128753"/>
        <dbReference type="ChEBI" id="CHEBI:128769"/>
        <dbReference type="EC" id="1.17.7.4"/>
    </reaction>
</comment>
<comment type="catalytic activity">
    <reaction evidence="1">
        <text>dimethylallyl diphosphate + 2 oxidized [2Fe-2S]-[ferredoxin] + H2O = (2E)-4-hydroxy-3-methylbut-2-enyl diphosphate + 2 reduced [2Fe-2S]-[ferredoxin] + 2 H(+)</text>
        <dbReference type="Rhea" id="RHEA:24825"/>
        <dbReference type="Rhea" id="RHEA-COMP:10000"/>
        <dbReference type="Rhea" id="RHEA-COMP:10001"/>
        <dbReference type="ChEBI" id="CHEBI:15377"/>
        <dbReference type="ChEBI" id="CHEBI:15378"/>
        <dbReference type="ChEBI" id="CHEBI:33737"/>
        <dbReference type="ChEBI" id="CHEBI:33738"/>
        <dbReference type="ChEBI" id="CHEBI:57623"/>
        <dbReference type="ChEBI" id="CHEBI:128753"/>
        <dbReference type="EC" id="1.17.7.4"/>
    </reaction>
</comment>
<comment type="cofactor">
    <cofactor evidence="1">
        <name>[4Fe-4S] cluster</name>
        <dbReference type="ChEBI" id="CHEBI:49883"/>
    </cofactor>
    <text evidence="1">Binds 1 [4Fe-4S] cluster per subunit.</text>
</comment>
<comment type="pathway">
    <text evidence="1">Isoprenoid biosynthesis; dimethylallyl diphosphate biosynthesis; dimethylallyl diphosphate from (2E)-4-hydroxy-3-methylbutenyl diphosphate: step 1/1.</text>
</comment>
<comment type="pathway">
    <text evidence="1">Isoprenoid biosynthesis; isopentenyl diphosphate biosynthesis via DXP pathway; isopentenyl diphosphate from 1-deoxy-D-xylulose 5-phosphate: step 6/6.</text>
</comment>
<comment type="similarity">
    <text evidence="1">Belongs to the IspH family.</text>
</comment>
<accession>B5E9S9</accession>
<keyword id="KW-0004">4Fe-4S</keyword>
<keyword id="KW-0408">Iron</keyword>
<keyword id="KW-0411">Iron-sulfur</keyword>
<keyword id="KW-0414">Isoprene biosynthesis</keyword>
<keyword id="KW-0479">Metal-binding</keyword>
<keyword id="KW-0560">Oxidoreductase</keyword>
<keyword id="KW-1185">Reference proteome</keyword>
<sequence length="283" mass="30493">MQVILAKHAGFCFGVKRATQLAFQAANIGSETYTLGPIIHSPQVVQRLEEMGVIPVDNVSEVETGGTIIIRSHGVAAEELEAAVRANLEVVDATCPFVKKAQEHVATLSKEGYDIVVVGDAVHPEVQGIVSYAAGRVYVVSSHKDVERLPRMSKIGVVAQTTQSFEHLHEVVAACLARGGEARVYNTICDATAVRQEEAKKLAGAVDCMVVIGGFNSANTMRLAQICLELLPRTHHVETASQIDEQWFKGVKKVGVTAGASTPKWIIDEVIDRISAIDKDKIS</sequence>
<reference key="1">
    <citation type="submission" date="2008-07" db="EMBL/GenBank/DDBJ databases">
        <title>Complete sequence of Geobacter bemidjiensis BEM.</title>
        <authorList>
            <consortium name="US DOE Joint Genome Institute"/>
            <person name="Lucas S."/>
            <person name="Copeland A."/>
            <person name="Lapidus A."/>
            <person name="Glavina del Rio T."/>
            <person name="Dalin E."/>
            <person name="Tice H."/>
            <person name="Bruce D."/>
            <person name="Goodwin L."/>
            <person name="Pitluck S."/>
            <person name="Kiss H."/>
            <person name="Brettin T."/>
            <person name="Detter J.C."/>
            <person name="Han C."/>
            <person name="Kuske C.R."/>
            <person name="Schmutz J."/>
            <person name="Larimer F."/>
            <person name="Land M."/>
            <person name="Hauser L."/>
            <person name="Kyrpides N."/>
            <person name="Lykidis A."/>
            <person name="Lovley D."/>
            <person name="Richardson P."/>
        </authorList>
    </citation>
    <scope>NUCLEOTIDE SEQUENCE [LARGE SCALE GENOMIC DNA]</scope>
    <source>
        <strain>ATCC BAA-1014 / DSM 16622 / JCM 12645 / Bem</strain>
    </source>
</reference>
<organism>
    <name type="scientific">Citrifermentans bemidjiense (strain ATCC BAA-1014 / DSM 16622 / JCM 12645 / Bem)</name>
    <name type="common">Geobacter bemidjiensis</name>
    <dbReference type="NCBI Taxonomy" id="404380"/>
    <lineage>
        <taxon>Bacteria</taxon>
        <taxon>Pseudomonadati</taxon>
        <taxon>Thermodesulfobacteriota</taxon>
        <taxon>Desulfuromonadia</taxon>
        <taxon>Geobacterales</taxon>
        <taxon>Geobacteraceae</taxon>
        <taxon>Citrifermentans</taxon>
    </lineage>
</organism>
<proteinExistence type="inferred from homology"/>
<evidence type="ECO:0000255" key="1">
    <source>
        <dbReference type="HAMAP-Rule" id="MF_00191"/>
    </source>
</evidence>